<sequence length="205" mass="22591">MANFKLMDQNGNNAGEVTLNDNVFSVEPNEAVVFDAIIRQRAGKRQGTSKVKNRSAVRGGGKKPWRQKGTGRARQGSIRAPQWRGGGVVFGPTPRSYAYSMPRKQRRLAIKSVLSQKLLDQNLVVLDKLTMDAPKTRDFVAILNGLKLEGKVLVVSDDKNVQLSAKNLPKVKVVPVNGLNVEDAVNYDKLVLTQDDVKKIEEVLA</sequence>
<name>RL4_LACDB</name>
<feature type="chain" id="PRO_1000052423" description="Large ribosomal subunit protein uL4">
    <location>
        <begin position="1"/>
        <end position="205"/>
    </location>
</feature>
<feature type="region of interest" description="Disordered" evidence="2">
    <location>
        <begin position="44"/>
        <end position="77"/>
    </location>
</feature>
<feature type="compositionally biased region" description="Basic residues" evidence="2">
    <location>
        <begin position="51"/>
        <end position="71"/>
    </location>
</feature>
<comment type="function">
    <text evidence="1">One of the primary rRNA binding proteins, this protein initially binds near the 5'-end of the 23S rRNA. It is important during the early stages of 50S assembly. It makes multiple contacts with different domains of the 23S rRNA in the assembled 50S subunit and ribosome.</text>
</comment>
<comment type="function">
    <text evidence="1">Forms part of the polypeptide exit tunnel.</text>
</comment>
<comment type="subunit">
    <text evidence="1">Part of the 50S ribosomal subunit.</text>
</comment>
<comment type="similarity">
    <text evidence="1">Belongs to the universal ribosomal protein uL4 family.</text>
</comment>
<reference key="1">
    <citation type="journal article" date="2006" name="Proc. Natl. Acad. Sci. U.S.A.">
        <title>Comparative genomics of the lactic acid bacteria.</title>
        <authorList>
            <person name="Makarova K.S."/>
            <person name="Slesarev A."/>
            <person name="Wolf Y.I."/>
            <person name="Sorokin A."/>
            <person name="Mirkin B."/>
            <person name="Koonin E.V."/>
            <person name="Pavlov A."/>
            <person name="Pavlova N."/>
            <person name="Karamychev V."/>
            <person name="Polouchine N."/>
            <person name="Shakhova V."/>
            <person name="Grigoriev I."/>
            <person name="Lou Y."/>
            <person name="Rohksar D."/>
            <person name="Lucas S."/>
            <person name="Huang K."/>
            <person name="Goodstein D.M."/>
            <person name="Hawkins T."/>
            <person name="Plengvidhya V."/>
            <person name="Welker D."/>
            <person name="Hughes J."/>
            <person name="Goh Y."/>
            <person name="Benson A."/>
            <person name="Baldwin K."/>
            <person name="Lee J.-H."/>
            <person name="Diaz-Muniz I."/>
            <person name="Dosti B."/>
            <person name="Smeianov V."/>
            <person name="Wechter W."/>
            <person name="Barabote R."/>
            <person name="Lorca G."/>
            <person name="Altermann E."/>
            <person name="Barrangou R."/>
            <person name="Ganesan B."/>
            <person name="Xie Y."/>
            <person name="Rawsthorne H."/>
            <person name="Tamir D."/>
            <person name="Parker C."/>
            <person name="Breidt F."/>
            <person name="Broadbent J.R."/>
            <person name="Hutkins R."/>
            <person name="O'Sullivan D."/>
            <person name="Steele J."/>
            <person name="Unlu G."/>
            <person name="Saier M.H. Jr."/>
            <person name="Klaenhammer T."/>
            <person name="Richardson P."/>
            <person name="Kozyavkin S."/>
            <person name="Weimer B.C."/>
            <person name="Mills D.A."/>
        </authorList>
    </citation>
    <scope>NUCLEOTIDE SEQUENCE [LARGE SCALE GENOMIC DNA]</scope>
    <source>
        <strain>ATCC BAA-365 / Lb-18</strain>
    </source>
</reference>
<organism>
    <name type="scientific">Lactobacillus delbrueckii subsp. bulgaricus (strain ATCC BAA-365 / Lb-18)</name>
    <dbReference type="NCBI Taxonomy" id="321956"/>
    <lineage>
        <taxon>Bacteria</taxon>
        <taxon>Bacillati</taxon>
        <taxon>Bacillota</taxon>
        <taxon>Bacilli</taxon>
        <taxon>Lactobacillales</taxon>
        <taxon>Lactobacillaceae</taxon>
        <taxon>Lactobacillus</taxon>
    </lineage>
</organism>
<dbReference type="EMBL" id="CP000412">
    <property type="protein sequence ID" value="ABJ58008.1"/>
    <property type="molecule type" value="Genomic_DNA"/>
</dbReference>
<dbReference type="RefSeq" id="WP_011543640.1">
    <property type="nucleotide sequence ID" value="NC_008529.1"/>
</dbReference>
<dbReference type="SMR" id="Q04C14"/>
<dbReference type="KEGG" id="lbu:LBUL_0351"/>
<dbReference type="HOGENOM" id="CLU_041575_5_2_9"/>
<dbReference type="BioCyc" id="LDEL321956:LBUL_RS01640-MONOMER"/>
<dbReference type="GO" id="GO:1990904">
    <property type="term" value="C:ribonucleoprotein complex"/>
    <property type="evidence" value="ECO:0007669"/>
    <property type="project" value="UniProtKB-KW"/>
</dbReference>
<dbReference type="GO" id="GO:0005840">
    <property type="term" value="C:ribosome"/>
    <property type="evidence" value="ECO:0007669"/>
    <property type="project" value="UniProtKB-KW"/>
</dbReference>
<dbReference type="GO" id="GO:0019843">
    <property type="term" value="F:rRNA binding"/>
    <property type="evidence" value="ECO:0007669"/>
    <property type="project" value="UniProtKB-UniRule"/>
</dbReference>
<dbReference type="GO" id="GO:0003735">
    <property type="term" value="F:structural constituent of ribosome"/>
    <property type="evidence" value="ECO:0007669"/>
    <property type="project" value="InterPro"/>
</dbReference>
<dbReference type="GO" id="GO:0006412">
    <property type="term" value="P:translation"/>
    <property type="evidence" value="ECO:0007669"/>
    <property type="project" value="UniProtKB-UniRule"/>
</dbReference>
<dbReference type="FunFam" id="3.40.1370.10:FF:000003">
    <property type="entry name" value="50S ribosomal protein L4"/>
    <property type="match status" value="1"/>
</dbReference>
<dbReference type="Gene3D" id="3.40.1370.10">
    <property type="match status" value="1"/>
</dbReference>
<dbReference type="HAMAP" id="MF_01328_B">
    <property type="entry name" value="Ribosomal_uL4_B"/>
    <property type="match status" value="1"/>
</dbReference>
<dbReference type="InterPro" id="IPR002136">
    <property type="entry name" value="Ribosomal_uL4"/>
</dbReference>
<dbReference type="InterPro" id="IPR013005">
    <property type="entry name" value="Ribosomal_uL4-like"/>
</dbReference>
<dbReference type="InterPro" id="IPR023574">
    <property type="entry name" value="Ribosomal_uL4_dom_sf"/>
</dbReference>
<dbReference type="NCBIfam" id="TIGR03953">
    <property type="entry name" value="rplD_bact"/>
    <property type="match status" value="1"/>
</dbReference>
<dbReference type="PANTHER" id="PTHR10746">
    <property type="entry name" value="50S RIBOSOMAL PROTEIN L4"/>
    <property type="match status" value="1"/>
</dbReference>
<dbReference type="PANTHER" id="PTHR10746:SF6">
    <property type="entry name" value="LARGE RIBOSOMAL SUBUNIT PROTEIN UL4M"/>
    <property type="match status" value="1"/>
</dbReference>
<dbReference type="Pfam" id="PF00573">
    <property type="entry name" value="Ribosomal_L4"/>
    <property type="match status" value="1"/>
</dbReference>
<dbReference type="SUPFAM" id="SSF52166">
    <property type="entry name" value="Ribosomal protein L4"/>
    <property type="match status" value="1"/>
</dbReference>
<keyword id="KW-0687">Ribonucleoprotein</keyword>
<keyword id="KW-0689">Ribosomal protein</keyword>
<keyword id="KW-0694">RNA-binding</keyword>
<keyword id="KW-0699">rRNA-binding</keyword>
<accession>Q04C14</accession>
<gene>
    <name evidence="1" type="primary">rplD</name>
    <name type="ordered locus">LBUL_0351</name>
</gene>
<protein>
    <recommendedName>
        <fullName evidence="1">Large ribosomal subunit protein uL4</fullName>
    </recommendedName>
    <alternativeName>
        <fullName evidence="3">50S ribosomal protein L4</fullName>
    </alternativeName>
</protein>
<proteinExistence type="inferred from homology"/>
<evidence type="ECO:0000255" key="1">
    <source>
        <dbReference type="HAMAP-Rule" id="MF_01328"/>
    </source>
</evidence>
<evidence type="ECO:0000256" key="2">
    <source>
        <dbReference type="SAM" id="MobiDB-lite"/>
    </source>
</evidence>
<evidence type="ECO:0000305" key="3"/>